<protein>
    <recommendedName>
        <fullName evidence="1">GMP synthase [glutamine-hydrolyzing]</fullName>
        <ecNumber evidence="1">6.3.5.2</ecNumber>
    </recommendedName>
    <alternativeName>
        <fullName evidence="1">GMP synthetase</fullName>
    </alternativeName>
    <alternativeName>
        <fullName evidence="1">Glutamine amidotransferase</fullName>
    </alternativeName>
</protein>
<name>GUAA_ROSDO</name>
<dbReference type="EC" id="6.3.5.2" evidence="1"/>
<dbReference type="EMBL" id="CP000362">
    <property type="protein sequence ID" value="ABG32309.1"/>
    <property type="molecule type" value="Genomic_DNA"/>
</dbReference>
<dbReference type="RefSeq" id="WP_011568925.1">
    <property type="nucleotide sequence ID" value="NC_008209.1"/>
</dbReference>
<dbReference type="SMR" id="Q165N4"/>
<dbReference type="STRING" id="375451.RD1_2778"/>
<dbReference type="KEGG" id="rde:RD1_2778"/>
<dbReference type="eggNOG" id="COG0518">
    <property type="taxonomic scope" value="Bacteria"/>
</dbReference>
<dbReference type="eggNOG" id="COG0519">
    <property type="taxonomic scope" value="Bacteria"/>
</dbReference>
<dbReference type="HOGENOM" id="CLU_014340_0_5_5"/>
<dbReference type="OrthoDB" id="9802219at2"/>
<dbReference type="UniPathway" id="UPA00189">
    <property type="reaction ID" value="UER00296"/>
</dbReference>
<dbReference type="Proteomes" id="UP000007029">
    <property type="component" value="Chromosome"/>
</dbReference>
<dbReference type="GO" id="GO:0005829">
    <property type="term" value="C:cytosol"/>
    <property type="evidence" value="ECO:0007669"/>
    <property type="project" value="TreeGrafter"/>
</dbReference>
<dbReference type="GO" id="GO:0005524">
    <property type="term" value="F:ATP binding"/>
    <property type="evidence" value="ECO:0007669"/>
    <property type="project" value="UniProtKB-UniRule"/>
</dbReference>
<dbReference type="GO" id="GO:0003921">
    <property type="term" value="F:GMP synthase activity"/>
    <property type="evidence" value="ECO:0007669"/>
    <property type="project" value="InterPro"/>
</dbReference>
<dbReference type="CDD" id="cd01742">
    <property type="entry name" value="GATase1_GMP_Synthase"/>
    <property type="match status" value="1"/>
</dbReference>
<dbReference type="CDD" id="cd01997">
    <property type="entry name" value="GMP_synthase_C"/>
    <property type="match status" value="1"/>
</dbReference>
<dbReference type="FunFam" id="3.30.300.10:FF:000002">
    <property type="entry name" value="GMP synthase [glutamine-hydrolyzing]"/>
    <property type="match status" value="1"/>
</dbReference>
<dbReference type="FunFam" id="3.40.50.620:FF:000001">
    <property type="entry name" value="GMP synthase [glutamine-hydrolyzing]"/>
    <property type="match status" value="1"/>
</dbReference>
<dbReference type="FunFam" id="3.40.50.880:FF:000001">
    <property type="entry name" value="GMP synthase [glutamine-hydrolyzing]"/>
    <property type="match status" value="1"/>
</dbReference>
<dbReference type="Gene3D" id="3.30.300.10">
    <property type="match status" value="1"/>
</dbReference>
<dbReference type="Gene3D" id="3.40.50.880">
    <property type="match status" value="1"/>
</dbReference>
<dbReference type="Gene3D" id="3.40.50.620">
    <property type="entry name" value="HUPs"/>
    <property type="match status" value="1"/>
</dbReference>
<dbReference type="HAMAP" id="MF_00344">
    <property type="entry name" value="GMP_synthase"/>
    <property type="match status" value="1"/>
</dbReference>
<dbReference type="InterPro" id="IPR029062">
    <property type="entry name" value="Class_I_gatase-like"/>
</dbReference>
<dbReference type="InterPro" id="IPR017926">
    <property type="entry name" value="GATASE"/>
</dbReference>
<dbReference type="InterPro" id="IPR001674">
    <property type="entry name" value="GMP_synth_C"/>
</dbReference>
<dbReference type="InterPro" id="IPR004739">
    <property type="entry name" value="GMP_synth_GATase"/>
</dbReference>
<dbReference type="InterPro" id="IPR022955">
    <property type="entry name" value="GMP_synthase"/>
</dbReference>
<dbReference type="InterPro" id="IPR025777">
    <property type="entry name" value="GMPS_ATP_PPase_dom"/>
</dbReference>
<dbReference type="InterPro" id="IPR014729">
    <property type="entry name" value="Rossmann-like_a/b/a_fold"/>
</dbReference>
<dbReference type="NCBIfam" id="TIGR00884">
    <property type="entry name" value="guaA_Cterm"/>
    <property type="match status" value="1"/>
</dbReference>
<dbReference type="NCBIfam" id="TIGR00888">
    <property type="entry name" value="guaA_Nterm"/>
    <property type="match status" value="1"/>
</dbReference>
<dbReference type="NCBIfam" id="NF000848">
    <property type="entry name" value="PRK00074.1"/>
    <property type="match status" value="1"/>
</dbReference>
<dbReference type="PANTHER" id="PTHR11922:SF2">
    <property type="entry name" value="GMP SYNTHASE [GLUTAMINE-HYDROLYZING]"/>
    <property type="match status" value="1"/>
</dbReference>
<dbReference type="PANTHER" id="PTHR11922">
    <property type="entry name" value="GMP SYNTHASE-RELATED"/>
    <property type="match status" value="1"/>
</dbReference>
<dbReference type="Pfam" id="PF00117">
    <property type="entry name" value="GATase"/>
    <property type="match status" value="1"/>
</dbReference>
<dbReference type="Pfam" id="PF00958">
    <property type="entry name" value="GMP_synt_C"/>
    <property type="match status" value="1"/>
</dbReference>
<dbReference type="Pfam" id="PF03054">
    <property type="entry name" value="tRNA_Me_trans"/>
    <property type="match status" value="1"/>
</dbReference>
<dbReference type="PRINTS" id="PR00097">
    <property type="entry name" value="ANTSNTHASEII"/>
</dbReference>
<dbReference type="PRINTS" id="PR00096">
    <property type="entry name" value="GATASE"/>
</dbReference>
<dbReference type="SUPFAM" id="SSF52402">
    <property type="entry name" value="Adenine nucleotide alpha hydrolases-like"/>
    <property type="match status" value="1"/>
</dbReference>
<dbReference type="SUPFAM" id="SSF52317">
    <property type="entry name" value="Class I glutamine amidotransferase-like"/>
    <property type="match status" value="1"/>
</dbReference>
<dbReference type="SUPFAM" id="SSF54810">
    <property type="entry name" value="GMP synthetase C-terminal dimerisation domain"/>
    <property type="match status" value="1"/>
</dbReference>
<dbReference type="PROSITE" id="PS51273">
    <property type="entry name" value="GATASE_TYPE_1"/>
    <property type="match status" value="1"/>
</dbReference>
<dbReference type="PROSITE" id="PS51553">
    <property type="entry name" value="GMPS_ATP_PPASE"/>
    <property type="match status" value="1"/>
</dbReference>
<accession>Q165N4</accession>
<reference key="1">
    <citation type="journal article" date="2007" name="J. Bacteriol.">
        <title>The complete genome sequence of Roseobacter denitrificans reveals a mixotrophic rather than photosynthetic metabolism.</title>
        <authorList>
            <person name="Swingley W.D."/>
            <person name="Sadekar S."/>
            <person name="Mastrian S.D."/>
            <person name="Matthies H.J."/>
            <person name="Hao J."/>
            <person name="Ramos H."/>
            <person name="Acharya C.R."/>
            <person name="Conrad A.L."/>
            <person name="Taylor H.L."/>
            <person name="Dejesa L.C."/>
            <person name="Shah M.K."/>
            <person name="O'Huallachain M.E."/>
            <person name="Lince M.T."/>
            <person name="Blankenship R.E."/>
            <person name="Beatty J.T."/>
            <person name="Touchman J.W."/>
        </authorList>
    </citation>
    <scope>NUCLEOTIDE SEQUENCE [LARGE SCALE GENOMIC DNA]</scope>
    <source>
        <strain>ATCC 33942 / OCh 114</strain>
    </source>
</reference>
<keyword id="KW-0067">ATP-binding</keyword>
<keyword id="KW-0315">Glutamine amidotransferase</keyword>
<keyword id="KW-0332">GMP biosynthesis</keyword>
<keyword id="KW-0436">Ligase</keyword>
<keyword id="KW-0547">Nucleotide-binding</keyword>
<keyword id="KW-0658">Purine biosynthesis</keyword>
<keyword id="KW-1185">Reference proteome</keyword>
<feature type="chain" id="PRO_1000120385" description="GMP synthase [glutamine-hydrolyzing]">
    <location>
        <begin position="1"/>
        <end position="522"/>
    </location>
</feature>
<feature type="domain" description="Glutamine amidotransferase type-1" evidence="1">
    <location>
        <begin position="8"/>
        <end position="204"/>
    </location>
</feature>
<feature type="domain" description="GMPS ATP-PPase" evidence="1">
    <location>
        <begin position="205"/>
        <end position="397"/>
    </location>
</feature>
<feature type="active site" description="Nucleophile" evidence="1">
    <location>
        <position position="86"/>
    </location>
</feature>
<feature type="active site" evidence="1">
    <location>
        <position position="179"/>
    </location>
</feature>
<feature type="active site" evidence="1">
    <location>
        <position position="181"/>
    </location>
</feature>
<feature type="binding site" evidence="1">
    <location>
        <begin position="232"/>
        <end position="238"/>
    </location>
    <ligand>
        <name>ATP</name>
        <dbReference type="ChEBI" id="CHEBI:30616"/>
    </ligand>
</feature>
<proteinExistence type="inferred from homology"/>
<organism>
    <name type="scientific">Roseobacter denitrificans (strain ATCC 33942 / OCh 114)</name>
    <name type="common">Erythrobacter sp. (strain OCh 114)</name>
    <name type="synonym">Roseobacter denitrificans</name>
    <dbReference type="NCBI Taxonomy" id="375451"/>
    <lineage>
        <taxon>Bacteria</taxon>
        <taxon>Pseudomonadati</taxon>
        <taxon>Pseudomonadota</taxon>
        <taxon>Alphaproteobacteria</taxon>
        <taxon>Rhodobacterales</taxon>
        <taxon>Roseobacteraceae</taxon>
        <taxon>Roseobacter</taxon>
    </lineage>
</organism>
<comment type="function">
    <text evidence="1">Catalyzes the synthesis of GMP from XMP.</text>
</comment>
<comment type="catalytic activity">
    <reaction evidence="1">
        <text>XMP + L-glutamine + ATP + H2O = GMP + L-glutamate + AMP + diphosphate + 2 H(+)</text>
        <dbReference type="Rhea" id="RHEA:11680"/>
        <dbReference type="ChEBI" id="CHEBI:15377"/>
        <dbReference type="ChEBI" id="CHEBI:15378"/>
        <dbReference type="ChEBI" id="CHEBI:29985"/>
        <dbReference type="ChEBI" id="CHEBI:30616"/>
        <dbReference type="ChEBI" id="CHEBI:33019"/>
        <dbReference type="ChEBI" id="CHEBI:57464"/>
        <dbReference type="ChEBI" id="CHEBI:58115"/>
        <dbReference type="ChEBI" id="CHEBI:58359"/>
        <dbReference type="ChEBI" id="CHEBI:456215"/>
        <dbReference type="EC" id="6.3.5.2"/>
    </reaction>
</comment>
<comment type="pathway">
    <text evidence="1">Purine metabolism; GMP biosynthesis; GMP from XMP (L-Gln route): step 1/1.</text>
</comment>
<comment type="subunit">
    <text evidence="1">Homodimer.</text>
</comment>
<gene>
    <name evidence="1" type="primary">guaA</name>
    <name type="ordered locus">RD1_2778</name>
</gene>
<evidence type="ECO:0000255" key="1">
    <source>
        <dbReference type="HAMAP-Rule" id="MF_00344"/>
    </source>
</evidence>
<sequence length="522" mass="57573">MSTSDHDRLLIIDFGSQVTQLIARRLRELNVYCEIHPFNLVDDAFLDAFGAKAVIFSGGPSSVFADGAPMPPASVFERGVPILGICYGQQVMMHCLGGKVERGHGTAEFGRAYVTPTAQKLDMLQGWFETDQDREQVWMSHGDHVSQIAPGFEVFGTSPNAPFAITADTTRHFYAVQFHPEVHHTPNGARLYENFVRLAGFKGDWTMGAYREEAIAKIREQVGSGRVICALSGGVDSSVAAVLIHEAIGDQLTCVYVDHGLMRKDESAQVVGMFREHYNLPLIHADESDLFLGKLEGVSDPETKRKIIGGLFIEVFEKYAKEIGGADFLAQGTLYPDVIESVSFSGGPSVTIKSHHNVGGLPERMNMQLVEPLRELFKDEVRALGHELGLPASFIGRHPFPGPGLAIRCPGEITREKLDILREADAVYIDQIRKHGLYDEIWQAFVAILPVRTVGVMGDGRTYDFACALRAVTSVDGMTADYYPFTHEFLGETATRIINEVPGINRVTYDITSKPPGTIEWE</sequence>